<reference key="1">
    <citation type="journal article" date="2015" name="Biotechnol. Biofuels">
        <title>Genetic basis of the highly efficient yeast Kluyveromyces marxianus: complete genome sequence and transcriptome analyses.</title>
        <authorList>
            <person name="Lertwattanasakul N."/>
            <person name="Kosaka T."/>
            <person name="Hosoyama A."/>
            <person name="Suzuki Y."/>
            <person name="Rodrussamee N."/>
            <person name="Matsutani M."/>
            <person name="Murata M."/>
            <person name="Fujimoto N."/>
            <person name="Suprayogi X."/>
            <person name="Tsuchikane K."/>
            <person name="Limtong S."/>
            <person name="Fujita N."/>
            <person name="Yamada M."/>
        </authorList>
    </citation>
    <scope>NUCLEOTIDE SEQUENCE [LARGE SCALE GENOMIC DNA]</scope>
    <source>
        <strain>DMKU3-1042 / BCC 29191 / NBRC 104275</strain>
    </source>
</reference>
<reference key="2">
    <citation type="journal article" date="2015" name="J. Biol. Chem.">
        <title>The thermotolerant yeast Kluyveromyces marxianus is a useful organism for structural and biochemical studies of autophagy.</title>
        <authorList>
            <person name="Yamamoto H."/>
            <person name="Shima T."/>
            <person name="Yamaguchi M."/>
            <person name="Mochizuki Y."/>
            <person name="Hoshida H."/>
            <person name="Kakuta S."/>
            <person name="Kondo-Kakuta C."/>
            <person name="Noda N.N."/>
            <person name="Inagaki F."/>
            <person name="Itoh T."/>
            <person name="Akada R."/>
            <person name="Ohsumi Y."/>
        </authorList>
    </citation>
    <scope>IDENTIFICATION</scope>
    <scope>FUNCTION</scope>
    <scope>DISRUPTION PHENOTYPE</scope>
</reference>
<reference evidence="6 7 8" key="3">
    <citation type="journal article" date="2012" name="Structure">
        <title>Structural insights into Atg10-mediated formation of the autophagy-essential Atg12-Atg5 conjugate.</title>
        <authorList>
            <person name="Yamaguchi M."/>
            <person name="Noda N.N."/>
            <person name="Yamamoto H."/>
            <person name="Shima T."/>
            <person name="Kumeta H."/>
            <person name="Kobashigawa Y."/>
            <person name="Akada R."/>
            <person name="Ohsumi Y."/>
            <person name="Inagaki F."/>
        </authorList>
    </citation>
    <scope>STRUCTURE BY NMR</scope>
    <scope>X-RAY CRYSTALLOGRAPHY (2.5 ANGSTROMS)</scope>
    <scope>INTERACTION WITH ATG5</scope>
    <scope>FUNCTION</scope>
    <scope>ACTIVE SITE</scope>
    <scope>MUTAGENESIS OF TYR-56; THR-99; TYR-110; ASN-114; CYS-116 AND THR-118</scope>
    <scope>BIOPHYSICOCHEMICAL PROPERTIES</scope>
</reference>
<evidence type="ECO:0000250" key="1">
    <source>
        <dbReference type="UniProtKB" id="Q07879"/>
    </source>
</evidence>
<evidence type="ECO:0000269" key="2">
    <source>
    </source>
</evidence>
<evidence type="ECO:0000269" key="3">
    <source>
    </source>
</evidence>
<evidence type="ECO:0000303" key="4">
    <source>
    </source>
</evidence>
<evidence type="ECO:0000305" key="5"/>
<evidence type="ECO:0000312" key="6">
    <source>
        <dbReference type="PDB" id="2LPU"/>
    </source>
</evidence>
<evidence type="ECO:0007744" key="7">
    <source>
        <dbReference type="PDB" id="2LPU"/>
    </source>
</evidence>
<evidence type="ECO:0007744" key="8">
    <source>
        <dbReference type="PDB" id="3VX7"/>
    </source>
</evidence>
<evidence type="ECO:0007829" key="9">
    <source>
        <dbReference type="PDB" id="2LPU"/>
    </source>
</evidence>
<evidence type="ECO:0007829" key="10">
    <source>
        <dbReference type="PDB" id="3VX7"/>
    </source>
</evidence>
<dbReference type="EC" id="2.3.2.-" evidence="1"/>
<dbReference type="EMBL" id="AP012220">
    <property type="protein sequence ID" value="BAO42720.1"/>
    <property type="molecule type" value="Genomic_DNA"/>
</dbReference>
<dbReference type="RefSeq" id="XP_022678453.1">
    <property type="nucleotide sequence ID" value="XM_022822165.1"/>
</dbReference>
<dbReference type="PDB" id="2LPU">
    <property type="method" value="NMR"/>
    <property type="chains" value="A=1-147"/>
</dbReference>
<dbReference type="PDB" id="3VX7">
    <property type="method" value="X-ray"/>
    <property type="resolution" value="3.20 A"/>
    <property type="chains" value="B=1-147"/>
</dbReference>
<dbReference type="PDBsum" id="2LPU"/>
<dbReference type="PDBsum" id="3VX7"/>
<dbReference type="SMR" id="W0TH64"/>
<dbReference type="GeneID" id="34718596"/>
<dbReference type="VEuPathDB" id="FungiDB:KLMA_80409"/>
<dbReference type="OrthoDB" id="4031501at2759"/>
<dbReference type="EvolutionaryTrace" id="W0TH64"/>
<dbReference type="Proteomes" id="UP000065495">
    <property type="component" value="Chromosome 8"/>
</dbReference>
<dbReference type="GO" id="GO:0034045">
    <property type="term" value="C:phagophore assembly site membrane"/>
    <property type="evidence" value="ECO:0007669"/>
    <property type="project" value="UniProtKB-SubCell"/>
</dbReference>
<dbReference type="GO" id="GO:0019787">
    <property type="term" value="F:ubiquitin-like protein transferase activity"/>
    <property type="evidence" value="ECO:0007669"/>
    <property type="project" value="InterPro"/>
</dbReference>
<dbReference type="GO" id="GO:0006914">
    <property type="term" value="P:autophagy"/>
    <property type="evidence" value="ECO:0007669"/>
    <property type="project" value="UniProtKB-KW"/>
</dbReference>
<dbReference type="GO" id="GO:0015031">
    <property type="term" value="P:protein transport"/>
    <property type="evidence" value="ECO:0007669"/>
    <property type="project" value="UniProtKB-KW"/>
</dbReference>
<dbReference type="Gene3D" id="3.30.1460.50">
    <property type="match status" value="1"/>
</dbReference>
<dbReference type="InterPro" id="IPR007135">
    <property type="entry name" value="Atg3/Atg10"/>
</dbReference>
<dbReference type="Pfam" id="PF03987">
    <property type="entry name" value="Autophagy_act_C"/>
    <property type="match status" value="1"/>
</dbReference>
<name>ATG10_KLUMD</name>
<keyword id="KW-0002">3D-structure</keyword>
<keyword id="KW-0072">Autophagy</keyword>
<keyword id="KW-0472">Membrane</keyword>
<keyword id="KW-0653">Protein transport</keyword>
<keyword id="KW-0808">Transferase</keyword>
<keyword id="KW-0813">Transport</keyword>
<keyword id="KW-0833">Ubl conjugation pathway</keyword>
<proteinExistence type="evidence at protein level"/>
<comment type="function">
    <text evidence="1 2 3">E2-like enzyme required for the cytoplasm to vacuole transport (Cvt), autophagy and nucleophagy (PubMed:22682742, PubMed:26442587). Acts as an E2-like enzyme that catalyzes the conjugation of ATG12 to ATG5 (PubMed:22682742). ATG12 conjugation to ATG5 is required for proper localization of ATG8 to the preautophagosomal structure (PAS) (By similarity). Likely serves as an ATG5-recognition molecule (By similarity).</text>
</comment>
<comment type="biophysicochemical properties">
    <kinetics>
        <KM evidence="2">10 uM for or ATG12-ATG5 conjugation</KM>
    </kinetics>
</comment>
<comment type="subunit">
    <text evidence="1 2">Forms homooligomers (By similarity). Interacts with ATG10 (PubMed:22682742). Interacts with ATG7 and ATG12 (By similarity).</text>
</comment>
<comment type="subcellular location">
    <subcellularLocation>
        <location evidence="1">Preautophagosomal structure membrane</location>
        <topology evidence="1">Peripheral membrane protein</topology>
    </subcellularLocation>
</comment>
<comment type="disruption phenotype">
    <text evidence="3">Impairs the formation of preautophagosomal structures (PubMed:26442587).</text>
</comment>
<comment type="miscellaneous">
    <text evidence="3">Kluyveromyces marxianus proteins are shorter in length and have a more ordered secondary structure than their S.cerevisiae counterparts, which might contribute to the superior thermotolerance and solubility (PubMed:26442587). K.marxianus could be therefore useful as a new model organism for further elucidation of the molecular details of autophagy (PubMed:26442587).</text>
</comment>
<comment type="similarity">
    <text evidence="5">Belongs to the ATG10 family.</text>
</comment>
<accession>W0TH64</accession>
<accession>J3QW31</accession>
<feature type="chain" id="PRO_0000443900" description="Ubiquitin-like-conjugating enzyme ATG10">
    <location>
        <begin position="1"/>
        <end position="147"/>
    </location>
</feature>
<feature type="active site" description="Glycyl thioester intermediate" evidence="1">
    <location>
        <position position="116"/>
    </location>
</feature>
<feature type="mutagenesis site" description="Forms the ATG12-ATG10 intermediate, but reduces the formation of the ATG12-ATG5 conjugate." evidence="2">
    <original>Y</original>
    <variation>A</variation>
    <location>
        <position position="56"/>
    </location>
</feature>
<feature type="mutagenesis site" description="Forms the ATG12-ATG10 intermediate, but reduces the formation of the ATG12-ATG5 conjugate." evidence="2">
    <original>T</original>
    <variation>A</variation>
    <location>
        <position position="99"/>
    </location>
</feature>
<feature type="mutagenesis site" description="Reduces the formation of the ATG12-ATG5 conjugate." evidence="2">
    <original>Y</original>
    <variation>A</variation>
    <location>
        <position position="110"/>
    </location>
</feature>
<feature type="mutagenesis site" description="Forms the ATG12-ATG10 intermediate, but reduces the formation of the ATG12-ATG5 conjugate." evidence="2">
    <original>N</original>
    <variation>A</variation>
    <location>
        <position position="114"/>
    </location>
</feature>
<feature type="mutagenesis site" description="Impairs the formation of the ATG12-ATG5 conjugate." evidence="2">
    <original>C</original>
    <variation>A</variation>
    <location>
        <position position="116"/>
    </location>
</feature>
<feature type="mutagenesis site" description="Forms the ATG12-ATG10 intermediate, but reduces the formation of the ATG12-ATG5 conjugate." evidence="2">
    <original>T</original>
    <variation>A</variation>
    <location>
        <position position="118"/>
    </location>
</feature>
<feature type="helix" evidence="10">
    <location>
        <begin position="4"/>
        <end position="20"/>
    </location>
</feature>
<feature type="strand" evidence="10">
    <location>
        <begin position="24"/>
        <end position="30"/>
    </location>
</feature>
<feature type="strand" evidence="10">
    <location>
        <begin position="33"/>
        <end position="41"/>
    </location>
</feature>
<feature type="strand" evidence="10">
    <location>
        <begin position="44"/>
        <end position="52"/>
    </location>
</feature>
<feature type="strand" evidence="10">
    <location>
        <begin position="54"/>
        <end position="70"/>
    </location>
</feature>
<feature type="strand" evidence="10">
    <location>
        <begin position="72"/>
        <end position="79"/>
    </location>
</feature>
<feature type="helix" evidence="10">
    <location>
        <begin position="84"/>
        <end position="90"/>
    </location>
</feature>
<feature type="strand" evidence="10">
    <location>
        <begin position="98"/>
        <end position="102"/>
    </location>
</feature>
<feature type="strand" evidence="10">
    <location>
        <begin position="106"/>
        <end position="113"/>
    </location>
</feature>
<feature type="helix" evidence="10">
    <location>
        <begin position="118"/>
        <end position="122"/>
    </location>
</feature>
<feature type="strand" evidence="9">
    <location>
        <begin position="126"/>
        <end position="128"/>
    </location>
</feature>
<feature type="helix" evidence="10">
    <location>
        <begin position="129"/>
        <end position="137"/>
    </location>
</feature>
<feature type="helix" evidence="10">
    <location>
        <begin position="138"/>
        <end position="140"/>
    </location>
</feature>
<sequence>MLTLPEYNEQIPNVRSLLTKWAKVERIQDVQDGLQLDVRLKTDTLLELHIYYDHVYHVPSIKFRLWSLDTEEDISSLRLLTLSDSELRSILNLGTFSVTLSTDMEMKSVYYYINNCDTDANVGSDVEHYLTRWISLYIRIFDLNFVP</sequence>
<gene>
    <name evidence="4" type="primary">ATG10</name>
    <name type="ORF">KLMA_80409</name>
</gene>
<protein>
    <recommendedName>
        <fullName evidence="1">Ubiquitin-like-conjugating enzyme ATG10</fullName>
        <ecNumber evidence="1">2.3.2.-</ecNumber>
    </recommendedName>
    <alternativeName>
        <fullName evidence="4">Autophagy-related protein 10</fullName>
    </alternativeName>
</protein>
<organism>
    <name type="scientific">Kluyveromyces marxianus (strain DMKU3-1042 / BCC 29191 / NBRC 104275)</name>
    <name type="common">Yeast</name>
    <name type="synonym">Candida kefyr</name>
    <dbReference type="NCBI Taxonomy" id="1003335"/>
    <lineage>
        <taxon>Eukaryota</taxon>
        <taxon>Fungi</taxon>
        <taxon>Dikarya</taxon>
        <taxon>Ascomycota</taxon>
        <taxon>Saccharomycotina</taxon>
        <taxon>Saccharomycetes</taxon>
        <taxon>Saccharomycetales</taxon>
        <taxon>Saccharomycetaceae</taxon>
        <taxon>Kluyveromyces</taxon>
    </lineage>
</organism>